<reference key="1">
    <citation type="journal article" date="2000" name="Nature">
        <title>The genome sequence of the food-borne pathogen Campylobacter jejuni reveals hypervariable sequences.</title>
        <authorList>
            <person name="Parkhill J."/>
            <person name="Wren B.W."/>
            <person name="Mungall K.L."/>
            <person name="Ketley J.M."/>
            <person name="Churcher C.M."/>
            <person name="Basham D."/>
            <person name="Chillingworth T."/>
            <person name="Davies R.M."/>
            <person name="Feltwell T."/>
            <person name="Holroyd S."/>
            <person name="Jagels K."/>
            <person name="Karlyshev A.V."/>
            <person name="Moule S."/>
            <person name="Pallen M.J."/>
            <person name="Penn C.W."/>
            <person name="Quail M.A."/>
            <person name="Rajandream M.A."/>
            <person name="Rutherford K.M."/>
            <person name="van Vliet A.H.M."/>
            <person name="Whitehead S."/>
            <person name="Barrell B.G."/>
        </authorList>
    </citation>
    <scope>NUCLEOTIDE SEQUENCE [LARGE SCALE GENOMIC DNA]</scope>
    <source>
        <strain>ATCC 700819 / NCTC 11168</strain>
    </source>
</reference>
<keyword id="KW-1185">Reference proteome</keyword>
<keyword id="KW-0687">Ribonucleoprotein</keyword>
<keyword id="KW-0689">Ribosomal protein</keyword>
<organism>
    <name type="scientific">Campylobacter jejuni subsp. jejuni serotype O:2 (strain ATCC 700819 / NCTC 11168)</name>
    <dbReference type="NCBI Taxonomy" id="192222"/>
    <lineage>
        <taxon>Bacteria</taxon>
        <taxon>Pseudomonadati</taxon>
        <taxon>Campylobacterota</taxon>
        <taxon>Epsilonproteobacteria</taxon>
        <taxon>Campylobacterales</taxon>
        <taxon>Campylobacteraceae</taxon>
        <taxon>Campylobacter</taxon>
    </lineage>
</organism>
<feature type="chain" id="PRO_0000163431" description="Large ribosomal subunit protein bL19">
    <location>
        <begin position="1"/>
        <end position="118"/>
    </location>
</feature>
<protein>
    <recommendedName>
        <fullName evidence="1">Large ribosomal subunit protein bL19</fullName>
    </recommendedName>
    <alternativeName>
        <fullName evidence="2">50S ribosomal protein L19</fullName>
    </alternativeName>
</protein>
<comment type="function">
    <text evidence="1">This protein is located at the 30S-50S ribosomal subunit interface and may play a role in the structure and function of the aminoacyl-tRNA binding site.</text>
</comment>
<comment type="similarity">
    <text evidence="1">Belongs to the bacterial ribosomal protein bL19 family.</text>
</comment>
<accession>Q9PPJ3</accession>
<accession>Q0PAG5</accession>
<proteinExistence type="inferred from homology"/>
<dbReference type="EMBL" id="AL111168">
    <property type="protein sequence ID" value="CAL34851.1"/>
    <property type="molecule type" value="Genomic_DNA"/>
</dbReference>
<dbReference type="PIR" id="E81342">
    <property type="entry name" value="E81342"/>
</dbReference>
<dbReference type="RefSeq" id="WP_002852307.1">
    <property type="nucleotide sequence ID" value="NZ_SZUC01000002.1"/>
</dbReference>
<dbReference type="RefSeq" id="YP_002344132.1">
    <property type="nucleotide sequence ID" value="NC_002163.1"/>
</dbReference>
<dbReference type="SMR" id="Q9PPJ3"/>
<dbReference type="IntAct" id="Q9PPJ3">
    <property type="interactions" value="21"/>
</dbReference>
<dbReference type="STRING" id="192222.Cj0714"/>
<dbReference type="PaxDb" id="192222-Cj0714"/>
<dbReference type="EnsemblBacteria" id="CAL34851">
    <property type="protein sequence ID" value="CAL34851"/>
    <property type="gene ID" value="Cj0714"/>
</dbReference>
<dbReference type="GeneID" id="905031"/>
<dbReference type="KEGG" id="cje:Cj0714"/>
<dbReference type="PATRIC" id="fig|192222.6.peg.706"/>
<dbReference type="eggNOG" id="COG0335">
    <property type="taxonomic scope" value="Bacteria"/>
</dbReference>
<dbReference type="HOGENOM" id="CLU_103507_2_2_7"/>
<dbReference type="OrthoDB" id="9803541at2"/>
<dbReference type="Proteomes" id="UP000000799">
    <property type="component" value="Chromosome"/>
</dbReference>
<dbReference type="GO" id="GO:0022625">
    <property type="term" value="C:cytosolic large ribosomal subunit"/>
    <property type="evidence" value="ECO:0007669"/>
    <property type="project" value="TreeGrafter"/>
</dbReference>
<dbReference type="GO" id="GO:0003735">
    <property type="term" value="F:structural constituent of ribosome"/>
    <property type="evidence" value="ECO:0007669"/>
    <property type="project" value="InterPro"/>
</dbReference>
<dbReference type="GO" id="GO:0006412">
    <property type="term" value="P:translation"/>
    <property type="evidence" value="ECO:0007669"/>
    <property type="project" value="UniProtKB-UniRule"/>
</dbReference>
<dbReference type="FunFam" id="2.30.30.790:FF:000001">
    <property type="entry name" value="50S ribosomal protein L19"/>
    <property type="match status" value="1"/>
</dbReference>
<dbReference type="Gene3D" id="2.30.30.790">
    <property type="match status" value="1"/>
</dbReference>
<dbReference type="HAMAP" id="MF_00402">
    <property type="entry name" value="Ribosomal_bL19"/>
    <property type="match status" value="1"/>
</dbReference>
<dbReference type="InterPro" id="IPR001857">
    <property type="entry name" value="Ribosomal_bL19"/>
</dbReference>
<dbReference type="InterPro" id="IPR018257">
    <property type="entry name" value="Ribosomal_bL19_CS"/>
</dbReference>
<dbReference type="InterPro" id="IPR038657">
    <property type="entry name" value="Ribosomal_bL19_sf"/>
</dbReference>
<dbReference type="InterPro" id="IPR008991">
    <property type="entry name" value="Translation_prot_SH3-like_sf"/>
</dbReference>
<dbReference type="NCBIfam" id="TIGR01024">
    <property type="entry name" value="rplS_bact"/>
    <property type="match status" value="1"/>
</dbReference>
<dbReference type="PANTHER" id="PTHR15680:SF9">
    <property type="entry name" value="LARGE RIBOSOMAL SUBUNIT PROTEIN BL19M"/>
    <property type="match status" value="1"/>
</dbReference>
<dbReference type="PANTHER" id="PTHR15680">
    <property type="entry name" value="RIBOSOMAL PROTEIN L19"/>
    <property type="match status" value="1"/>
</dbReference>
<dbReference type="Pfam" id="PF01245">
    <property type="entry name" value="Ribosomal_L19"/>
    <property type="match status" value="1"/>
</dbReference>
<dbReference type="PIRSF" id="PIRSF002191">
    <property type="entry name" value="Ribosomal_L19"/>
    <property type="match status" value="1"/>
</dbReference>
<dbReference type="PRINTS" id="PR00061">
    <property type="entry name" value="RIBOSOMALL19"/>
</dbReference>
<dbReference type="SUPFAM" id="SSF50104">
    <property type="entry name" value="Translation proteins SH3-like domain"/>
    <property type="match status" value="1"/>
</dbReference>
<dbReference type="PROSITE" id="PS01015">
    <property type="entry name" value="RIBOSOMAL_L19"/>
    <property type="match status" value="1"/>
</dbReference>
<sequence>MKNKYIEQFEAKQIEGKNVPDFRAGDTLKLAIRIKEGDKTRIQNFEGICIARRGNGVSETFIVRKIGANNVGVERIFPIYSESLESITVLRRGRVRRARLFYLRDRRGKAARIKELKK</sequence>
<gene>
    <name evidence="1" type="primary">rplS</name>
    <name type="ordered locus">Cj0714</name>
</gene>
<evidence type="ECO:0000255" key="1">
    <source>
        <dbReference type="HAMAP-Rule" id="MF_00402"/>
    </source>
</evidence>
<evidence type="ECO:0000305" key="2"/>
<name>RL19_CAMJE</name>